<gene>
    <name evidence="1" type="primary">rplR</name>
    <name type="ordered locus">Amet_4462</name>
</gene>
<feature type="chain" id="PRO_1000067635" description="Large ribosomal subunit protein uL18">
    <location>
        <begin position="1"/>
        <end position="122"/>
    </location>
</feature>
<feature type="region of interest" description="Disordered" evidence="2">
    <location>
        <begin position="1"/>
        <end position="22"/>
    </location>
</feature>
<feature type="compositionally biased region" description="Basic residues" evidence="2">
    <location>
        <begin position="1"/>
        <end position="20"/>
    </location>
</feature>
<dbReference type="EMBL" id="CP000724">
    <property type="protein sequence ID" value="ABR50534.1"/>
    <property type="molecule type" value="Genomic_DNA"/>
</dbReference>
<dbReference type="RefSeq" id="WP_012065425.1">
    <property type="nucleotide sequence ID" value="NC_009633.1"/>
</dbReference>
<dbReference type="SMR" id="A6TWG6"/>
<dbReference type="STRING" id="293826.Amet_4462"/>
<dbReference type="KEGG" id="amt:Amet_4462"/>
<dbReference type="eggNOG" id="COG0256">
    <property type="taxonomic scope" value="Bacteria"/>
</dbReference>
<dbReference type="HOGENOM" id="CLU_098841_0_1_9"/>
<dbReference type="OrthoDB" id="9810939at2"/>
<dbReference type="Proteomes" id="UP000001572">
    <property type="component" value="Chromosome"/>
</dbReference>
<dbReference type="GO" id="GO:0022625">
    <property type="term" value="C:cytosolic large ribosomal subunit"/>
    <property type="evidence" value="ECO:0007669"/>
    <property type="project" value="TreeGrafter"/>
</dbReference>
<dbReference type="GO" id="GO:0008097">
    <property type="term" value="F:5S rRNA binding"/>
    <property type="evidence" value="ECO:0007669"/>
    <property type="project" value="TreeGrafter"/>
</dbReference>
<dbReference type="GO" id="GO:0003735">
    <property type="term" value="F:structural constituent of ribosome"/>
    <property type="evidence" value="ECO:0007669"/>
    <property type="project" value="InterPro"/>
</dbReference>
<dbReference type="GO" id="GO:0006412">
    <property type="term" value="P:translation"/>
    <property type="evidence" value="ECO:0007669"/>
    <property type="project" value="UniProtKB-UniRule"/>
</dbReference>
<dbReference type="CDD" id="cd00432">
    <property type="entry name" value="Ribosomal_L18_L5e"/>
    <property type="match status" value="1"/>
</dbReference>
<dbReference type="FunFam" id="3.30.420.100:FF:000001">
    <property type="entry name" value="50S ribosomal protein L18"/>
    <property type="match status" value="1"/>
</dbReference>
<dbReference type="Gene3D" id="3.30.420.100">
    <property type="match status" value="1"/>
</dbReference>
<dbReference type="HAMAP" id="MF_01337_B">
    <property type="entry name" value="Ribosomal_uL18_B"/>
    <property type="match status" value="1"/>
</dbReference>
<dbReference type="InterPro" id="IPR004389">
    <property type="entry name" value="Ribosomal_uL18_bac-type"/>
</dbReference>
<dbReference type="InterPro" id="IPR005484">
    <property type="entry name" value="Ribosomal_uL18_bac/euk"/>
</dbReference>
<dbReference type="NCBIfam" id="TIGR00060">
    <property type="entry name" value="L18_bact"/>
    <property type="match status" value="1"/>
</dbReference>
<dbReference type="PANTHER" id="PTHR12899">
    <property type="entry name" value="39S RIBOSOMAL PROTEIN L18, MITOCHONDRIAL"/>
    <property type="match status" value="1"/>
</dbReference>
<dbReference type="PANTHER" id="PTHR12899:SF3">
    <property type="entry name" value="LARGE RIBOSOMAL SUBUNIT PROTEIN UL18M"/>
    <property type="match status" value="1"/>
</dbReference>
<dbReference type="Pfam" id="PF00861">
    <property type="entry name" value="Ribosomal_L18p"/>
    <property type="match status" value="1"/>
</dbReference>
<dbReference type="SUPFAM" id="SSF53137">
    <property type="entry name" value="Translational machinery components"/>
    <property type="match status" value="1"/>
</dbReference>
<keyword id="KW-1185">Reference proteome</keyword>
<keyword id="KW-0687">Ribonucleoprotein</keyword>
<keyword id="KW-0689">Ribosomal protein</keyword>
<keyword id="KW-0694">RNA-binding</keyword>
<keyword id="KW-0699">rRNA-binding</keyword>
<accession>A6TWG6</accession>
<organism>
    <name type="scientific">Alkaliphilus metalliredigens (strain QYMF)</name>
    <dbReference type="NCBI Taxonomy" id="293826"/>
    <lineage>
        <taxon>Bacteria</taxon>
        <taxon>Bacillati</taxon>
        <taxon>Bacillota</taxon>
        <taxon>Clostridia</taxon>
        <taxon>Peptostreptococcales</taxon>
        <taxon>Natronincolaceae</taxon>
        <taxon>Alkaliphilus</taxon>
    </lineage>
</organism>
<comment type="function">
    <text evidence="1">This is one of the proteins that bind and probably mediate the attachment of the 5S RNA into the large ribosomal subunit, where it forms part of the central protuberance.</text>
</comment>
<comment type="subunit">
    <text evidence="1">Part of the 50S ribosomal subunit; part of the 5S rRNA/L5/L18/L25 subcomplex. Contacts the 5S and 23S rRNAs.</text>
</comment>
<comment type="similarity">
    <text evidence="1">Belongs to the universal ribosomal protein uL18 family.</text>
</comment>
<name>RL18_ALKMQ</name>
<proteinExistence type="inferred from homology"/>
<reference key="1">
    <citation type="journal article" date="2016" name="Genome Announc.">
        <title>Complete genome sequence of Alkaliphilus metalliredigens strain QYMF, an alkaliphilic and metal-reducing bacterium isolated from borax-contaminated leachate ponds.</title>
        <authorList>
            <person name="Hwang C."/>
            <person name="Copeland A."/>
            <person name="Lucas S."/>
            <person name="Lapidus A."/>
            <person name="Barry K."/>
            <person name="Detter J.C."/>
            <person name="Glavina Del Rio T."/>
            <person name="Hammon N."/>
            <person name="Israni S."/>
            <person name="Dalin E."/>
            <person name="Tice H."/>
            <person name="Pitluck S."/>
            <person name="Chertkov O."/>
            <person name="Brettin T."/>
            <person name="Bruce D."/>
            <person name="Han C."/>
            <person name="Schmutz J."/>
            <person name="Larimer F."/>
            <person name="Land M.L."/>
            <person name="Hauser L."/>
            <person name="Kyrpides N."/>
            <person name="Mikhailova N."/>
            <person name="Ye Q."/>
            <person name="Zhou J."/>
            <person name="Richardson P."/>
            <person name="Fields M.W."/>
        </authorList>
    </citation>
    <scope>NUCLEOTIDE SEQUENCE [LARGE SCALE GENOMIC DNA]</scope>
    <source>
        <strain>QYMF</strain>
    </source>
</reference>
<evidence type="ECO:0000255" key="1">
    <source>
        <dbReference type="HAMAP-Rule" id="MF_01337"/>
    </source>
</evidence>
<evidence type="ECO:0000256" key="2">
    <source>
        <dbReference type="SAM" id="MobiDB-lite"/>
    </source>
</evidence>
<evidence type="ECO:0000305" key="3"/>
<sequence length="122" mass="13320">MLKKVSKNTNRQGRHQRVRNKITGTSQRPRLNVYRSLNHIYAQVIDDVAGITLVAASTLDEAIKSQVEASGNQDAAKLVGELVGKRALEKGVSTVTFDRGGYIYHGRVKALADGAREAGLKF</sequence>
<protein>
    <recommendedName>
        <fullName evidence="1">Large ribosomal subunit protein uL18</fullName>
    </recommendedName>
    <alternativeName>
        <fullName evidence="3">50S ribosomal protein L18</fullName>
    </alternativeName>
</protein>